<accession>P69988</accession>
<accession>Q0WEE8</accession>
<accession>Q66A44</accession>
<accession>Q9AM39</accession>
<comment type="function">
    <text evidence="1">Transcription regulator that can specifically activate or repress expression of target genes.</text>
</comment>
<comment type="subunit">
    <text evidence="1">Homodimer.</text>
</comment>
<comment type="similarity">
    <text evidence="1">Belongs to the SlyA family.</text>
</comment>
<protein>
    <recommendedName>
        <fullName evidence="1">Transcriptional regulator SlyA</fullName>
    </recommendedName>
    <alternativeName>
        <fullName>Regulator of virulence protein A</fullName>
    </alternativeName>
    <alternativeName>
        <fullName>Transcriptional regulator for cryptic hemolysin</fullName>
    </alternativeName>
</protein>
<keyword id="KW-0010">Activator</keyword>
<keyword id="KW-0238">DNA-binding</keyword>
<keyword id="KW-1185">Reference proteome</keyword>
<keyword id="KW-0678">Repressor</keyword>
<keyword id="KW-0804">Transcription</keyword>
<keyword id="KW-0805">Transcription regulation</keyword>
<keyword id="KW-0843">Virulence</keyword>
<organism>
    <name type="scientific">Yersinia pestis</name>
    <dbReference type="NCBI Taxonomy" id="632"/>
    <lineage>
        <taxon>Bacteria</taxon>
        <taxon>Pseudomonadati</taxon>
        <taxon>Pseudomonadota</taxon>
        <taxon>Gammaproteobacteria</taxon>
        <taxon>Enterobacterales</taxon>
        <taxon>Yersiniaceae</taxon>
        <taxon>Yersinia</taxon>
    </lineage>
</organism>
<evidence type="ECO:0000255" key="1">
    <source>
        <dbReference type="HAMAP-Rule" id="MF_01819"/>
    </source>
</evidence>
<gene>
    <name evidence="1" type="primary">slyA</name>
    <name type="synonym">rovA</name>
    <name type="ordered locus">YPO2374</name>
    <name type="ordered locus">y1961</name>
    <name type="ordered locus">YP_2160</name>
</gene>
<feature type="chain" id="PRO_0000054398" description="Transcriptional regulator SlyA">
    <location>
        <begin position="1"/>
        <end position="143"/>
    </location>
</feature>
<feature type="domain" description="HTH marR-type" evidence="1">
    <location>
        <begin position="2"/>
        <end position="135"/>
    </location>
</feature>
<feature type="DNA-binding region" description="H-T-H motif" evidence="1">
    <location>
        <begin position="49"/>
        <end position="72"/>
    </location>
</feature>
<reference key="1">
    <citation type="journal article" date="2001" name="Nature">
        <title>Genome sequence of Yersinia pestis, the causative agent of plague.</title>
        <authorList>
            <person name="Parkhill J."/>
            <person name="Wren B.W."/>
            <person name="Thomson N.R."/>
            <person name="Titball R.W."/>
            <person name="Holden M.T.G."/>
            <person name="Prentice M.B."/>
            <person name="Sebaihia M."/>
            <person name="James K.D."/>
            <person name="Churcher C.M."/>
            <person name="Mungall K.L."/>
            <person name="Baker S."/>
            <person name="Basham D."/>
            <person name="Bentley S.D."/>
            <person name="Brooks K."/>
            <person name="Cerdeno-Tarraga A.-M."/>
            <person name="Chillingworth T."/>
            <person name="Cronin A."/>
            <person name="Davies R.M."/>
            <person name="Davis P."/>
            <person name="Dougan G."/>
            <person name="Feltwell T."/>
            <person name="Hamlin N."/>
            <person name="Holroyd S."/>
            <person name="Jagels K."/>
            <person name="Karlyshev A.V."/>
            <person name="Leather S."/>
            <person name="Moule S."/>
            <person name="Oyston P.C.F."/>
            <person name="Quail M.A."/>
            <person name="Rutherford K.M."/>
            <person name="Simmonds M."/>
            <person name="Skelton J."/>
            <person name="Stevens K."/>
            <person name="Whitehead S."/>
            <person name="Barrell B.G."/>
        </authorList>
    </citation>
    <scope>NUCLEOTIDE SEQUENCE [LARGE SCALE GENOMIC DNA]</scope>
    <source>
        <strain>CO-92 / Biovar Orientalis</strain>
    </source>
</reference>
<reference key="2">
    <citation type="journal article" date="2002" name="J. Bacteriol.">
        <title>Genome sequence of Yersinia pestis KIM.</title>
        <authorList>
            <person name="Deng W."/>
            <person name="Burland V."/>
            <person name="Plunkett G. III"/>
            <person name="Boutin A."/>
            <person name="Mayhew G.F."/>
            <person name="Liss P."/>
            <person name="Perna N.T."/>
            <person name="Rose D.J."/>
            <person name="Mau B."/>
            <person name="Zhou S."/>
            <person name="Schwartz D.C."/>
            <person name="Fetherston J.D."/>
            <person name="Lindler L.E."/>
            <person name="Brubaker R.R."/>
            <person name="Plano G.V."/>
            <person name="Straley S.C."/>
            <person name="McDonough K.A."/>
            <person name="Nilles M.L."/>
            <person name="Matson J.S."/>
            <person name="Blattner F.R."/>
            <person name="Perry R.D."/>
        </authorList>
    </citation>
    <scope>NUCLEOTIDE SEQUENCE [LARGE SCALE GENOMIC DNA]</scope>
    <source>
        <strain>KIM10+ / Biovar Mediaevalis</strain>
    </source>
</reference>
<reference key="3">
    <citation type="journal article" date="2004" name="DNA Res.">
        <title>Complete genome sequence of Yersinia pestis strain 91001, an isolate avirulent to humans.</title>
        <authorList>
            <person name="Song Y."/>
            <person name="Tong Z."/>
            <person name="Wang J."/>
            <person name="Wang L."/>
            <person name="Guo Z."/>
            <person name="Han Y."/>
            <person name="Zhang J."/>
            <person name="Pei D."/>
            <person name="Zhou D."/>
            <person name="Qin H."/>
            <person name="Pang X."/>
            <person name="Han Y."/>
            <person name="Zhai J."/>
            <person name="Li M."/>
            <person name="Cui B."/>
            <person name="Qi Z."/>
            <person name="Jin L."/>
            <person name="Dai R."/>
            <person name="Chen F."/>
            <person name="Li S."/>
            <person name="Ye C."/>
            <person name="Du Z."/>
            <person name="Lin W."/>
            <person name="Wang J."/>
            <person name="Yu J."/>
            <person name="Yang H."/>
            <person name="Wang J."/>
            <person name="Huang P."/>
            <person name="Yang R."/>
        </authorList>
    </citation>
    <scope>NUCLEOTIDE SEQUENCE [LARGE SCALE GENOMIC DNA]</scope>
    <source>
        <strain>91001 / Biovar Mediaevalis</strain>
    </source>
</reference>
<sequence>MESTLGSDLARLVRVWRALIDHRLKPLELTQTHWVTLYNINRLPPEQSQIQLAKAIGIEQPSLVRTLDQLEEKGLITRHTCANDRRAKRIKLTEQSSPIIEQVDGVICSTRKEILGGISSDEIAVLSGLIDKLEKNIIQLQTK</sequence>
<proteinExistence type="inferred from homology"/>
<name>SLYA_YERPE</name>
<dbReference type="EMBL" id="AL590842">
    <property type="protein sequence ID" value="CAL21002.1"/>
    <property type="molecule type" value="Genomic_DNA"/>
</dbReference>
<dbReference type="EMBL" id="AE009952">
    <property type="protein sequence ID" value="AAM85527.1"/>
    <property type="molecule type" value="Genomic_DNA"/>
</dbReference>
<dbReference type="EMBL" id="AE017042">
    <property type="protein sequence ID" value="AAS62368.1"/>
    <property type="molecule type" value="Genomic_DNA"/>
</dbReference>
<dbReference type="PIR" id="AG0289">
    <property type="entry name" value="AG0289"/>
</dbReference>
<dbReference type="RefSeq" id="WP_002210955.1">
    <property type="nucleotide sequence ID" value="NZ_WUCM01000049.1"/>
</dbReference>
<dbReference type="RefSeq" id="YP_002347340.1">
    <property type="nucleotide sequence ID" value="NC_003143.1"/>
</dbReference>
<dbReference type="SMR" id="P69988"/>
<dbReference type="STRING" id="214092.YPO2374"/>
<dbReference type="PaxDb" id="214092-YPO2374"/>
<dbReference type="DNASU" id="1146908"/>
<dbReference type="EnsemblBacteria" id="AAS62368">
    <property type="protein sequence ID" value="AAS62368"/>
    <property type="gene ID" value="YP_2160"/>
</dbReference>
<dbReference type="KEGG" id="ype:YPO2374"/>
<dbReference type="KEGG" id="ypk:y1961"/>
<dbReference type="KEGG" id="ypm:YP_2160"/>
<dbReference type="PATRIC" id="fig|1028802.3.peg.1952"/>
<dbReference type="eggNOG" id="COG1846">
    <property type="taxonomic scope" value="Bacteria"/>
</dbReference>
<dbReference type="HOGENOM" id="CLU_083287_18_2_6"/>
<dbReference type="OMA" id="DEHRFGM"/>
<dbReference type="OrthoDB" id="5296557at2"/>
<dbReference type="PHI-base" id="PHI:6114"/>
<dbReference type="Proteomes" id="UP000000815">
    <property type="component" value="Chromosome"/>
</dbReference>
<dbReference type="Proteomes" id="UP000001019">
    <property type="component" value="Chromosome"/>
</dbReference>
<dbReference type="Proteomes" id="UP000002490">
    <property type="component" value="Chromosome"/>
</dbReference>
<dbReference type="GO" id="GO:0003677">
    <property type="term" value="F:DNA binding"/>
    <property type="evidence" value="ECO:0007669"/>
    <property type="project" value="UniProtKB-UniRule"/>
</dbReference>
<dbReference type="GO" id="GO:0003700">
    <property type="term" value="F:DNA-binding transcription factor activity"/>
    <property type="evidence" value="ECO:0007669"/>
    <property type="project" value="UniProtKB-UniRule"/>
</dbReference>
<dbReference type="GO" id="GO:0006355">
    <property type="term" value="P:regulation of DNA-templated transcription"/>
    <property type="evidence" value="ECO:0000318"/>
    <property type="project" value="GO_Central"/>
</dbReference>
<dbReference type="GO" id="GO:0006950">
    <property type="term" value="P:response to stress"/>
    <property type="evidence" value="ECO:0000318"/>
    <property type="project" value="GO_Central"/>
</dbReference>
<dbReference type="FunFam" id="1.10.10.10:FF:000261">
    <property type="entry name" value="Transcriptional regulator SlyA"/>
    <property type="match status" value="1"/>
</dbReference>
<dbReference type="Gene3D" id="1.10.10.10">
    <property type="entry name" value="Winged helix-like DNA-binding domain superfamily/Winged helix DNA-binding domain"/>
    <property type="match status" value="1"/>
</dbReference>
<dbReference type="HAMAP" id="MF_01819">
    <property type="entry name" value="HTH_type_SlyA"/>
    <property type="match status" value="1"/>
</dbReference>
<dbReference type="InterPro" id="IPR000835">
    <property type="entry name" value="HTH_MarR-typ"/>
</dbReference>
<dbReference type="InterPro" id="IPR039422">
    <property type="entry name" value="MarR/SlyA-like"/>
</dbReference>
<dbReference type="InterPro" id="IPR023187">
    <property type="entry name" value="Tscrpt_reg_MarR-type_CS"/>
</dbReference>
<dbReference type="InterPro" id="IPR023071">
    <property type="entry name" value="Tscrpt_reg_SlyA"/>
</dbReference>
<dbReference type="InterPro" id="IPR036388">
    <property type="entry name" value="WH-like_DNA-bd_sf"/>
</dbReference>
<dbReference type="InterPro" id="IPR036390">
    <property type="entry name" value="WH_DNA-bd_sf"/>
</dbReference>
<dbReference type="NCBIfam" id="NF002926">
    <property type="entry name" value="PRK03573.1"/>
    <property type="match status" value="1"/>
</dbReference>
<dbReference type="PANTHER" id="PTHR33164:SF64">
    <property type="entry name" value="TRANSCRIPTIONAL REGULATOR SLYA"/>
    <property type="match status" value="1"/>
</dbReference>
<dbReference type="PANTHER" id="PTHR33164">
    <property type="entry name" value="TRANSCRIPTIONAL REGULATOR, MARR FAMILY"/>
    <property type="match status" value="1"/>
</dbReference>
<dbReference type="Pfam" id="PF01047">
    <property type="entry name" value="MarR"/>
    <property type="match status" value="1"/>
</dbReference>
<dbReference type="PRINTS" id="PR00598">
    <property type="entry name" value="HTHMARR"/>
</dbReference>
<dbReference type="SMART" id="SM00347">
    <property type="entry name" value="HTH_MARR"/>
    <property type="match status" value="1"/>
</dbReference>
<dbReference type="SUPFAM" id="SSF46785">
    <property type="entry name" value="Winged helix' DNA-binding domain"/>
    <property type="match status" value="1"/>
</dbReference>
<dbReference type="PROSITE" id="PS01117">
    <property type="entry name" value="HTH_MARR_1"/>
    <property type="match status" value="1"/>
</dbReference>
<dbReference type="PROSITE" id="PS50995">
    <property type="entry name" value="HTH_MARR_2"/>
    <property type="match status" value="1"/>
</dbReference>